<protein>
    <recommendedName>
        <fullName evidence="1">Large ribosomal subunit protein uL29</fullName>
    </recommendedName>
    <alternativeName>
        <fullName evidence="2">50S ribosomal protein L29</fullName>
    </alternativeName>
</protein>
<accession>A7ZSK1</accession>
<dbReference type="EMBL" id="CP000800">
    <property type="protein sequence ID" value="ABV18905.1"/>
    <property type="molecule type" value="Genomic_DNA"/>
</dbReference>
<dbReference type="RefSeq" id="WP_000644741.1">
    <property type="nucleotide sequence ID" value="NC_009801.1"/>
</dbReference>
<dbReference type="SMR" id="A7ZSK1"/>
<dbReference type="GeneID" id="93778675"/>
<dbReference type="KEGG" id="ecw:EcE24377A_3795"/>
<dbReference type="HOGENOM" id="CLU_158491_1_2_6"/>
<dbReference type="Proteomes" id="UP000001122">
    <property type="component" value="Chromosome"/>
</dbReference>
<dbReference type="GO" id="GO:0022625">
    <property type="term" value="C:cytosolic large ribosomal subunit"/>
    <property type="evidence" value="ECO:0007669"/>
    <property type="project" value="TreeGrafter"/>
</dbReference>
<dbReference type="GO" id="GO:0003735">
    <property type="term" value="F:structural constituent of ribosome"/>
    <property type="evidence" value="ECO:0007669"/>
    <property type="project" value="InterPro"/>
</dbReference>
<dbReference type="GO" id="GO:0006412">
    <property type="term" value="P:translation"/>
    <property type="evidence" value="ECO:0007669"/>
    <property type="project" value="UniProtKB-UniRule"/>
</dbReference>
<dbReference type="CDD" id="cd00427">
    <property type="entry name" value="Ribosomal_L29_HIP"/>
    <property type="match status" value="1"/>
</dbReference>
<dbReference type="Gene3D" id="6.10.140.1970">
    <property type="match status" value="1"/>
</dbReference>
<dbReference type="HAMAP" id="MF_00374">
    <property type="entry name" value="Ribosomal_uL29"/>
    <property type="match status" value="1"/>
</dbReference>
<dbReference type="InterPro" id="IPR050063">
    <property type="entry name" value="Ribosomal_protein_uL29"/>
</dbReference>
<dbReference type="InterPro" id="IPR001854">
    <property type="entry name" value="Ribosomal_uL29"/>
</dbReference>
<dbReference type="InterPro" id="IPR018254">
    <property type="entry name" value="Ribosomal_uL29_CS"/>
</dbReference>
<dbReference type="InterPro" id="IPR036049">
    <property type="entry name" value="Ribosomal_uL29_sf"/>
</dbReference>
<dbReference type="NCBIfam" id="TIGR00012">
    <property type="entry name" value="L29"/>
    <property type="match status" value="1"/>
</dbReference>
<dbReference type="PANTHER" id="PTHR10916">
    <property type="entry name" value="60S RIBOSOMAL PROTEIN L35/50S RIBOSOMAL PROTEIN L29"/>
    <property type="match status" value="1"/>
</dbReference>
<dbReference type="PANTHER" id="PTHR10916:SF0">
    <property type="entry name" value="LARGE RIBOSOMAL SUBUNIT PROTEIN UL29C"/>
    <property type="match status" value="1"/>
</dbReference>
<dbReference type="Pfam" id="PF00831">
    <property type="entry name" value="Ribosomal_L29"/>
    <property type="match status" value="1"/>
</dbReference>
<dbReference type="SUPFAM" id="SSF46561">
    <property type="entry name" value="Ribosomal protein L29 (L29p)"/>
    <property type="match status" value="1"/>
</dbReference>
<dbReference type="PROSITE" id="PS00579">
    <property type="entry name" value="RIBOSOMAL_L29"/>
    <property type="match status" value="1"/>
</dbReference>
<organism>
    <name type="scientific">Escherichia coli O139:H28 (strain E24377A / ETEC)</name>
    <dbReference type="NCBI Taxonomy" id="331111"/>
    <lineage>
        <taxon>Bacteria</taxon>
        <taxon>Pseudomonadati</taxon>
        <taxon>Pseudomonadota</taxon>
        <taxon>Gammaproteobacteria</taxon>
        <taxon>Enterobacterales</taxon>
        <taxon>Enterobacteriaceae</taxon>
        <taxon>Escherichia</taxon>
    </lineage>
</organism>
<sequence>MKAKELREKSVEELNTELLNLLREQFNLRMQAASGQLQQSHLLKQVRRDVARVKTLLNEKAGA</sequence>
<comment type="similarity">
    <text evidence="1">Belongs to the universal ribosomal protein uL29 family.</text>
</comment>
<keyword id="KW-1185">Reference proteome</keyword>
<keyword id="KW-0687">Ribonucleoprotein</keyword>
<keyword id="KW-0689">Ribosomal protein</keyword>
<evidence type="ECO:0000255" key="1">
    <source>
        <dbReference type="HAMAP-Rule" id="MF_00374"/>
    </source>
</evidence>
<evidence type="ECO:0000305" key="2"/>
<feature type="chain" id="PRO_1000059965" description="Large ribosomal subunit protein uL29">
    <location>
        <begin position="1"/>
        <end position="63"/>
    </location>
</feature>
<name>RL29_ECO24</name>
<proteinExistence type="inferred from homology"/>
<reference key="1">
    <citation type="journal article" date="2008" name="J. Bacteriol.">
        <title>The pangenome structure of Escherichia coli: comparative genomic analysis of E. coli commensal and pathogenic isolates.</title>
        <authorList>
            <person name="Rasko D.A."/>
            <person name="Rosovitz M.J."/>
            <person name="Myers G.S.A."/>
            <person name="Mongodin E.F."/>
            <person name="Fricke W.F."/>
            <person name="Gajer P."/>
            <person name="Crabtree J."/>
            <person name="Sebaihia M."/>
            <person name="Thomson N.R."/>
            <person name="Chaudhuri R."/>
            <person name="Henderson I.R."/>
            <person name="Sperandio V."/>
            <person name="Ravel J."/>
        </authorList>
    </citation>
    <scope>NUCLEOTIDE SEQUENCE [LARGE SCALE GENOMIC DNA]</scope>
    <source>
        <strain>E24377A / ETEC</strain>
    </source>
</reference>
<gene>
    <name evidence="1" type="primary">rpmC</name>
    <name type="ordered locus">EcE24377A_3795</name>
</gene>